<evidence type="ECO:0000250" key="1"/>
<evidence type="ECO:0000255" key="2">
    <source>
        <dbReference type="HAMAP-Rule" id="MF_04029"/>
    </source>
</evidence>
<evidence type="ECO:0000256" key="3">
    <source>
        <dbReference type="SAM" id="MobiDB-lite"/>
    </source>
</evidence>
<comment type="function">
    <text evidence="2">Catalyzes the transfer of the gamma-phospho group of ATP to thymidine to generate dTMP in the salvage pathway of pyrimidine synthesis. The dTMP serves as a substrate for DNA polymerase during viral DNA replication. Allows the virus to be reactivated and to grow in non-proliferative cells lacking a high concentration of phosphorylated nucleic acid precursors.</text>
</comment>
<comment type="catalytic activity">
    <reaction evidence="2">
        <text>thymidine + ATP = dTMP + ADP + H(+)</text>
        <dbReference type="Rhea" id="RHEA:19129"/>
        <dbReference type="ChEBI" id="CHEBI:15378"/>
        <dbReference type="ChEBI" id="CHEBI:17748"/>
        <dbReference type="ChEBI" id="CHEBI:30616"/>
        <dbReference type="ChEBI" id="CHEBI:63528"/>
        <dbReference type="ChEBI" id="CHEBI:456216"/>
        <dbReference type="EC" id="2.7.1.21"/>
    </reaction>
</comment>
<comment type="subunit">
    <text evidence="2">Homodimer.</text>
</comment>
<comment type="interaction">
    <interactant intactId="EBI-2621028">
        <id>Q3KSQ2</id>
    </interactant>
    <interactant intactId="EBI-2621032">
        <id>P0C731</id>
        <label>BGLF4</label>
    </interactant>
    <organismsDiffer>false</organismsDiffer>
    <experiments>2</experiments>
</comment>
<comment type="subcellular location">
    <subcellularLocation>
        <location>Virion tegument</location>
    </subcellularLocation>
    <subcellularLocation>
        <location evidence="1">Host nucleus</location>
    </subcellularLocation>
    <text evidence="1">Localizes to the centrosome and more precisely to the periphery of the centriole, tightly encircling the tubulin-rich centrioles.</text>
</comment>
<comment type="miscellaneous">
    <text evidence="1">Phosphorylates and thereby activates certain drugs like acyclovir (ACV), valacyclovir, and famciclovir to a toxic form, that leads to successful suppression of the infection, while the uninfected cell does not have this ability because it lacks TK.</text>
</comment>
<comment type="similarity">
    <text evidence="2">Belongs to the herpesviridae thymidine kinase family.</text>
</comment>
<keyword id="KW-0067">ATP-binding</keyword>
<keyword id="KW-0237">DNA synthesis</keyword>
<keyword id="KW-0244">Early protein</keyword>
<keyword id="KW-1048">Host nucleus</keyword>
<keyword id="KW-0418">Kinase</keyword>
<keyword id="KW-0547">Nucleotide-binding</keyword>
<keyword id="KW-0808">Transferase</keyword>
<keyword id="KW-0946">Virion</keyword>
<keyword id="KW-0920">Virion tegument</keyword>
<proteinExistence type="evidence at protein level"/>
<organism>
    <name type="scientific">Epstein-Barr virus (strain GD1)</name>
    <name type="common">HHV-4</name>
    <name type="synonym">Human gammaherpesvirus 4</name>
    <dbReference type="NCBI Taxonomy" id="10376"/>
    <lineage>
        <taxon>Viruses</taxon>
        <taxon>Duplodnaviria</taxon>
        <taxon>Heunggongvirae</taxon>
        <taxon>Peploviricota</taxon>
        <taxon>Herviviricetes</taxon>
        <taxon>Herpesvirales</taxon>
        <taxon>Orthoherpesviridae</taxon>
        <taxon>Gammaherpesvirinae</taxon>
        <taxon>Lymphocryptovirus</taxon>
        <taxon>Lymphocryptovirus humangamma4</taxon>
    </lineage>
</organism>
<dbReference type="EC" id="2.7.1.21" evidence="2"/>
<dbReference type="EMBL" id="AY961628">
    <property type="protein sequence ID" value="AAY41147.1"/>
    <property type="molecule type" value="Genomic_DNA"/>
</dbReference>
<dbReference type="SMR" id="Q3KSQ2"/>
<dbReference type="IntAct" id="Q3KSQ2">
    <property type="interactions" value="8"/>
</dbReference>
<dbReference type="Proteomes" id="UP000007641">
    <property type="component" value="Genome"/>
</dbReference>
<dbReference type="GO" id="GO:0042025">
    <property type="term" value="C:host cell nucleus"/>
    <property type="evidence" value="ECO:0007669"/>
    <property type="project" value="UniProtKB-SubCell"/>
</dbReference>
<dbReference type="GO" id="GO:0019033">
    <property type="term" value="C:viral tegument"/>
    <property type="evidence" value="ECO:0007669"/>
    <property type="project" value="UniProtKB-SubCell"/>
</dbReference>
<dbReference type="GO" id="GO:0005524">
    <property type="term" value="F:ATP binding"/>
    <property type="evidence" value="ECO:0007669"/>
    <property type="project" value="UniProtKB-KW"/>
</dbReference>
<dbReference type="GO" id="GO:0004797">
    <property type="term" value="F:thymidine kinase activity"/>
    <property type="evidence" value="ECO:0007669"/>
    <property type="project" value="UniProtKB-EC"/>
</dbReference>
<dbReference type="GO" id="GO:0071897">
    <property type="term" value="P:DNA biosynthetic process"/>
    <property type="evidence" value="ECO:0007669"/>
    <property type="project" value="UniProtKB-KW"/>
</dbReference>
<dbReference type="GO" id="GO:0006230">
    <property type="term" value="P:TMP biosynthetic process"/>
    <property type="evidence" value="ECO:0007669"/>
    <property type="project" value="InterPro"/>
</dbReference>
<dbReference type="Gene3D" id="3.40.50.300">
    <property type="entry name" value="P-loop containing nucleotide triphosphate hydrolases"/>
    <property type="match status" value="1"/>
</dbReference>
<dbReference type="HAMAP" id="MF_04029">
    <property type="entry name" value="HSV_KITH"/>
    <property type="match status" value="1"/>
</dbReference>
<dbReference type="InterPro" id="IPR050566">
    <property type="entry name" value="Deoxyribonucleoside_kinase"/>
</dbReference>
<dbReference type="InterPro" id="IPR001889">
    <property type="entry name" value="Herpes_TK"/>
</dbReference>
<dbReference type="InterPro" id="IPR013672">
    <property type="entry name" value="Herpes_TK_C"/>
</dbReference>
<dbReference type="InterPro" id="IPR027417">
    <property type="entry name" value="P-loop_NTPase"/>
</dbReference>
<dbReference type="PANTHER" id="PTHR10513:SF35">
    <property type="entry name" value="DEOXYADENOSINE KINASE"/>
    <property type="match status" value="1"/>
</dbReference>
<dbReference type="PANTHER" id="PTHR10513">
    <property type="entry name" value="DEOXYNUCLEOSIDE KINASE"/>
    <property type="match status" value="1"/>
</dbReference>
<dbReference type="Pfam" id="PF00693">
    <property type="entry name" value="Herpes_TK"/>
    <property type="match status" value="1"/>
</dbReference>
<dbReference type="Pfam" id="PF08465">
    <property type="entry name" value="Herpes_TK_C"/>
    <property type="match status" value="1"/>
</dbReference>
<dbReference type="SUPFAM" id="SSF52540">
    <property type="entry name" value="P-loop containing nucleoside triphosphate hydrolases"/>
    <property type="match status" value="1"/>
</dbReference>
<name>KITH_EBVG</name>
<gene>
    <name evidence="2" type="primary">TK</name>
    <name type="ORF">BXLF1</name>
</gene>
<reference key="1">
    <citation type="journal article" date="2005" name="J. Virol.">
        <title>Genomic sequence analysis of Epstein-Barr virus strain GD1 from a nasopharyngeal carcinoma patient.</title>
        <authorList>
            <person name="Zeng M.-S."/>
            <person name="Li D.-J."/>
            <person name="Liu Q.-L."/>
            <person name="Song L.-B."/>
            <person name="Li M.-Z."/>
            <person name="Zhang R.-H."/>
            <person name="Yu X.-J."/>
            <person name="Wang H.-M."/>
            <person name="Ernberg I."/>
            <person name="Zeng Y.-X."/>
        </authorList>
    </citation>
    <scope>NUCLEOTIDE SEQUENCE [LARGE SCALE GENOMIC DNA]</scope>
</reference>
<sequence>MAGFPGKEAGPPGGWRKCQEDESPENERHENFYAEIDDFAPSVLTPTGSDSGAGEEDDDGLYQVPTHWPPLMAPTGLSGERVPCRTQAAVTSNTGNSPGSRHTSCPFTLPRGAQPPAPAHQKPTAPTPKPRSRECGPSKTPDPFSWFRKTSCTEGGADSTSRSFMYQKGFEEGLAGLGLDDKSDCESEDESNFRRPSSHSALKQKNGGKGKPSGLFEHLAAHGREFSKLSKHAAQLKRLSGSVMNVLNLDDAQDTRQAKAQRKESTRVPIVIHLTNHVPVIKPACSLFLEGAPGVGKTTMLNHLKAVFGDLTIVVPEPMRYWTHVYENAIKAMHKNVTRARHGREDTSAEVLACQMKFTTPFRVLASRKRSLLVTESGARSVAPLDCWILHDRHLLSASVVFPLMLLRSQLLSYSDFIQVLATFTADPGDTIVWMKLNVEENMRRLKKRGRKHESGLDAGYLKSVNDAYHAVYCAWLLTQYFAPEDIVKVCAGLTTITTVCHQSHTPIIRSGVAEKLYKNSIYSVLKEVIQPYRADAVLLEVCLAFTRTLAYLQFVLVDLSEFQDDLPGCWTEIYMQALKNPAIRSQFFDWAGLSKVISDFERGNRD</sequence>
<accession>Q3KSQ2</accession>
<protein>
    <recommendedName>
        <fullName evidence="2">Thymidine kinase</fullName>
        <ecNumber evidence="2">2.7.1.21</ecNumber>
    </recommendedName>
</protein>
<organismHost>
    <name type="scientific">Homo sapiens</name>
    <name type="common">Human</name>
    <dbReference type="NCBI Taxonomy" id="9606"/>
</organismHost>
<feature type="chain" id="PRO_0000375958" description="Thymidine kinase">
    <location>
        <begin position="1"/>
        <end position="607"/>
    </location>
</feature>
<feature type="region of interest" description="Disordered" evidence="3">
    <location>
        <begin position="1"/>
        <end position="160"/>
    </location>
</feature>
<feature type="region of interest" description="Disordered" evidence="3">
    <location>
        <begin position="180"/>
        <end position="215"/>
    </location>
</feature>
<feature type="compositionally biased region" description="Basic and acidic residues" evidence="3">
    <location>
        <begin position="17"/>
        <end position="32"/>
    </location>
</feature>
<feature type="compositionally biased region" description="Polar residues" evidence="3">
    <location>
        <begin position="88"/>
        <end position="106"/>
    </location>
</feature>
<feature type="compositionally biased region" description="Polar residues" evidence="3">
    <location>
        <begin position="148"/>
        <end position="160"/>
    </location>
</feature>
<feature type="compositionally biased region" description="Polar residues" evidence="3">
    <location>
        <begin position="194"/>
        <end position="203"/>
    </location>
</feature>
<feature type="active site" description="Proton acceptor" evidence="2">
    <location>
        <position position="317"/>
    </location>
</feature>
<feature type="binding site" evidence="2">
    <location>
        <begin position="291"/>
        <end position="298"/>
    </location>
    <ligand>
        <name>ATP</name>
        <dbReference type="ChEBI" id="CHEBI:30616"/>
    </ligand>
</feature>
<feature type="binding site" evidence="2">
    <location>
        <position position="355"/>
    </location>
    <ligand>
        <name>substrate</name>
    </ligand>
</feature>
<feature type="binding site" evidence="2">
    <location>
        <position position="445"/>
    </location>
    <ligand>
        <name>ATP</name>
        <dbReference type="ChEBI" id="CHEBI:30616"/>
    </ligand>
</feature>
<feature type="binding site" evidence="2">
    <location>
        <position position="451"/>
    </location>
    <ligand>
        <name>substrate</name>
    </ligand>
</feature>